<sequence>MSQRLTDVLQRLAATIEARKGGDPSVSYTAKLLNDPALAAKKLGEEAVETVIAAVAQGSDALAAESADLLYHWLALMAASGVSLDAVAEKLEAREGTSGIAEKASRA</sequence>
<comment type="catalytic activity">
    <reaction>
        <text>1-(5-phospho-beta-D-ribosyl)-ATP + H2O = 1-(5-phospho-beta-D-ribosyl)-5'-AMP + diphosphate + H(+)</text>
        <dbReference type="Rhea" id="RHEA:22828"/>
        <dbReference type="ChEBI" id="CHEBI:15377"/>
        <dbReference type="ChEBI" id="CHEBI:15378"/>
        <dbReference type="ChEBI" id="CHEBI:33019"/>
        <dbReference type="ChEBI" id="CHEBI:59457"/>
        <dbReference type="ChEBI" id="CHEBI:73183"/>
        <dbReference type="EC" id="3.6.1.31"/>
    </reaction>
</comment>
<comment type="pathway">
    <text>Amino-acid biosynthesis; L-histidine biosynthesis; L-histidine from 5-phospho-alpha-D-ribose 1-diphosphate: step 2/9.</text>
</comment>
<comment type="subcellular location">
    <subcellularLocation>
        <location evidence="1">Cytoplasm</location>
    </subcellularLocation>
</comment>
<comment type="similarity">
    <text evidence="2">Belongs to the PRA-PH family.</text>
</comment>
<accession>Q9A228</accession>
<feature type="chain" id="PRO_0000136355" description="Phosphoribosyl-ATP pyrophosphatase">
    <location>
        <begin position="1"/>
        <end position="107"/>
    </location>
</feature>
<reference key="1">
    <citation type="journal article" date="2001" name="Proc. Natl. Acad. Sci. U.S.A.">
        <title>Complete genome sequence of Caulobacter crescentus.</title>
        <authorList>
            <person name="Nierman W.C."/>
            <person name="Feldblyum T.V."/>
            <person name="Laub M.T."/>
            <person name="Paulsen I.T."/>
            <person name="Nelson K.E."/>
            <person name="Eisen J.A."/>
            <person name="Heidelberg J.F."/>
            <person name="Alley M.R.K."/>
            <person name="Ohta N."/>
            <person name="Maddock J.R."/>
            <person name="Potocka I."/>
            <person name="Nelson W.C."/>
            <person name="Newton A."/>
            <person name="Stephens C."/>
            <person name="Phadke N.D."/>
            <person name="Ely B."/>
            <person name="DeBoy R.T."/>
            <person name="Dodson R.J."/>
            <person name="Durkin A.S."/>
            <person name="Gwinn M.L."/>
            <person name="Haft D.H."/>
            <person name="Kolonay J.F."/>
            <person name="Smit J."/>
            <person name="Craven M.B."/>
            <person name="Khouri H.M."/>
            <person name="Shetty J."/>
            <person name="Berry K.J."/>
            <person name="Utterback T.R."/>
            <person name="Tran K."/>
            <person name="Wolf A.M."/>
            <person name="Vamathevan J.J."/>
            <person name="Ermolaeva M.D."/>
            <person name="White O."/>
            <person name="Salzberg S.L."/>
            <person name="Venter J.C."/>
            <person name="Shapiro L."/>
            <person name="Fraser C.M."/>
        </authorList>
    </citation>
    <scope>NUCLEOTIDE SEQUENCE [LARGE SCALE GENOMIC DNA]</scope>
    <source>
        <strain>ATCC 19089 / CIP 103742 / CB 15</strain>
    </source>
</reference>
<name>HIS2_CAUVC</name>
<gene>
    <name type="primary">hisE</name>
    <name type="ordered locus">CC_3738</name>
</gene>
<evidence type="ECO:0000250" key="1"/>
<evidence type="ECO:0000305" key="2"/>
<proteinExistence type="inferred from homology"/>
<organism>
    <name type="scientific">Caulobacter vibrioides (strain ATCC 19089 / CIP 103742 / CB 15)</name>
    <name type="common">Caulobacter crescentus</name>
    <dbReference type="NCBI Taxonomy" id="190650"/>
    <lineage>
        <taxon>Bacteria</taxon>
        <taxon>Pseudomonadati</taxon>
        <taxon>Pseudomonadota</taxon>
        <taxon>Alphaproteobacteria</taxon>
        <taxon>Caulobacterales</taxon>
        <taxon>Caulobacteraceae</taxon>
        <taxon>Caulobacter</taxon>
    </lineage>
</organism>
<keyword id="KW-0028">Amino-acid biosynthesis</keyword>
<keyword id="KW-0067">ATP-binding</keyword>
<keyword id="KW-0963">Cytoplasm</keyword>
<keyword id="KW-0368">Histidine biosynthesis</keyword>
<keyword id="KW-0378">Hydrolase</keyword>
<keyword id="KW-0547">Nucleotide-binding</keyword>
<keyword id="KW-1185">Reference proteome</keyword>
<protein>
    <recommendedName>
        <fullName>Phosphoribosyl-ATP pyrophosphatase</fullName>
        <shortName>PRA-PH</shortName>
        <ecNumber>3.6.1.31</ecNumber>
    </recommendedName>
</protein>
<dbReference type="EC" id="3.6.1.31"/>
<dbReference type="EMBL" id="AE005673">
    <property type="protein sequence ID" value="AAK25700.1"/>
    <property type="molecule type" value="Genomic_DNA"/>
</dbReference>
<dbReference type="PIR" id="H87712">
    <property type="entry name" value="H87712"/>
</dbReference>
<dbReference type="RefSeq" id="NP_422532.1">
    <property type="nucleotide sequence ID" value="NC_002696.2"/>
</dbReference>
<dbReference type="RefSeq" id="WP_010921565.1">
    <property type="nucleotide sequence ID" value="NC_002696.2"/>
</dbReference>
<dbReference type="SMR" id="Q9A228"/>
<dbReference type="STRING" id="190650.CC_3738"/>
<dbReference type="EnsemblBacteria" id="AAK25700">
    <property type="protein sequence ID" value="AAK25700"/>
    <property type="gene ID" value="CC_3738"/>
</dbReference>
<dbReference type="KEGG" id="ccr:CC_3738"/>
<dbReference type="PATRIC" id="fig|190650.5.peg.3740"/>
<dbReference type="eggNOG" id="COG0140">
    <property type="taxonomic scope" value="Bacteria"/>
</dbReference>
<dbReference type="HOGENOM" id="CLU_123337_1_1_5"/>
<dbReference type="BioCyc" id="CAULO:CC3738-MONOMER"/>
<dbReference type="UniPathway" id="UPA00031">
    <property type="reaction ID" value="UER00007"/>
</dbReference>
<dbReference type="Proteomes" id="UP000001816">
    <property type="component" value="Chromosome"/>
</dbReference>
<dbReference type="GO" id="GO:0005737">
    <property type="term" value="C:cytoplasm"/>
    <property type="evidence" value="ECO:0007669"/>
    <property type="project" value="UniProtKB-SubCell"/>
</dbReference>
<dbReference type="GO" id="GO:0005524">
    <property type="term" value="F:ATP binding"/>
    <property type="evidence" value="ECO:0007669"/>
    <property type="project" value="UniProtKB-KW"/>
</dbReference>
<dbReference type="GO" id="GO:0004636">
    <property type="term" value="F:phosphoribosyl-ATP diphosphatase activity"/>
    <property type="evidence" value="ECO:0007669"/>
    <property type="project" value="UniProtKB-UniRule"/>
</dbReference>
<dbReference type="GO" id="GO:0000105">
    <property type="term" value="P:L-histidine biosynthetic process"/>
    <property type="evidence" value="ECO:0007669"/>
    <property type="project" value="UniProtKB-UniRule"/>
</dbReference>
<dbReference type="CDD" id="cd11534">
    <property type="entry name" value="NTP-PPase_HisIE_like"/>
    <property type="match status" value="1"/>
</dbReference>
<dbReference type="Gene3D" id="1.10.287.1080">
    <property type="entry name" value="MazG-like"/>
    <property type="match status" value="1"/>
</dbReference>
<dbReference type="HAMAP" id="MF_01020">
    <property type="entry name" value="HisE"/>
    <property type="match status" value="1"/>
</dbReference>
<dbReference type="InterPro" id="IPR008179">
    <property type="entry name" value="HisE"/>
</dbReference>
<dbReference type="InterPro" id="IPR021130">
    <property type="entry name" value="PRib-ATP_PPHydrolase-like"/>
</dbReference>
<dbReference type="NCBIfam" id="TIGR03188">
    <property type="entry name" value="histidine_hisI"/>
    <property type="match status" value="1"/>
</dbReference>
<dbReference type="NCBIfam" id="NF001613">
    <property type="entry name" value="PRK00400.1-5"/>
    <property type="match status" value="1"/>
</dbReference>
<dbReference type="PANTHER" id="PTHR42945">
    <property type="entry name" value="HISTIDINE BIOSYNTHESIS BIFUNCTIONAL PROTEIN"/>
    <property type="match status" value="1"/>
</dbReference>
<dbReference type="PANTHER" id="PTHR42945:SF1">
    <property type="entry name" value="HISTIDINE BIOSYNTHESIS BIFUNCTIONAL PROTEIN HIS7"/>
    <property type="match status" value="1"/>
</dbReference>
<dbReference type="Pfam" id="PF01503">
    <property type="entry name" value="PRA-PH"/>
    <property type="match status" value="1"/>
</dbReference>
<dbReference type="SUPFAM" id="SSF101386">
    <property type="entry name" value="all-alpha NTP pyrophosphatases"/>
    <property type="match status" value="1"/>
</dbReference>